<evidence type="ECO:0000255" key="1"/>
<evidence type="ECO:0000255" key="2">
    <source>
        <dbReference type="PROSITE-ProRule" id="PRU01116"/>
    </source>
</evidence>
<evidence type="ECO:0000269" key="3">
    <source>
    </source>
</evidence>
<evidence type="ECO:0000269" key="4">
    <source>
    </source>
</evidence>
<evidence type="ECO:0000303" key="5">
    <source>
    </source>
</evidence>
<evidence type="ECO:0000305" key="6"/>
<evidence type="ECO:0000305" key="7">
    <source>
    </source>
</evidence>
<evidence type="ECO:0000305" key="8">
    <source>
    </source>
</evidence>
<protein>
    <recommendedName>
        <fullName evidence="5">Protein Ami</fullName>
        <ecNumber evidence="8">3.2.1.-</ecNumber>
    </recommendedName>
    <alternativeName>
        <fullName evidence="8">Autolysin</fullName>
    </alternativeName>
</protein>
<reference key="1">
    <citation type="journal article" date="1997" name="Mol. Microbiol.">
        <title>InlB: an invasion protein of Listeria monocytogenes with a novel type of surface association.</title>
        <authorList>
            <person name="Braun L."/>
            <person name="Dramsi S."/>
            <person name="Dehoux P."/>
            <person name="Bierne H."/>
            <person name="Lindahl G."/>
            <person name="Cossart P."/>
        </authorList>
    </citation>
    <scope>NUCLEOTIDE SEQUENCE [GENOMIC DNA]</scope>
    <scope>FUNCTION</scope>
    <scope>SUBCELLULAR LOCATION</scope>
    <scope>DOMAIN</scope>
    <scope>DISRUPTION PHENOTYPE</scope>
    <source>
        <strain>EGD / Mackaness</strain>
    </source>
</reference>
<reference key="2">
    <citation type="journal article" date="1999" name="Mol. Microbiol.">
        <title>Interaction between the protein InlB of Listeria monocytogenes and lipoteichoic acid: a novel mechanism of protein association at the surface of Gram-positive bacteria.</title>
        <authorList>
            <person name="Jonquieres R."/>
            <person name="Bierne H."/>
            <person name="Fiedler F."/>
            <person name="Gounon P."/>
            <person name="Cossart P."/>
        </authorList>
    </citation>
    <scope>SUBCELLULAR LOCATION</scope>
    <source>
        <strain>EGD / Mackaness</strain>
    </source>
</reference>
<reference key="3">
    <citation type="journal article" date="2000" name="Microbiology">
        <title>Identification of new loci involved in adhesion of Listeria monocytogenes to eukaryotic cells.</title>
        <authorList>
            <person name="Milohanic E."/>
            <person name="Pron B."/>
            <person name="Berche P."/>
            <person name="Gaillard J.-L."/>
        </authorList>
    </citation>
    <scope>DISRUPTION PHENOTYPE</scope>
    <source>
        <strain>EGD / Mackaness</strain>
    </source>
</reference>
<organism>
    <name type="scientific">Listeria monocytogenes serotype 1/2a (strain EGD / Mackaness)</name>
    <dbReference type="NCBI Taxonomy" id="1334565"/>
    <lineage>
        <taxon>Bacteria</taxon>
        <taxon>Bacillati</taxon>
        <taxon>Bacillota</taxon>
        <taxon>Bacilli</taxon>
        <taxon>Bacillales</taxon>
        <taxon>Listeriaceae</taxon>
        <taxon>Listeria</taxon>
    </lineage>
</organism>
<sequence length="917" mass="102353">MKKLVKSAVVFAGLVFIGTSATMITEKASAASTDPVQKVDGQATYIPKGVRDGTATEEHDGFEDGTNSVLQQVPLLRATTGYPDVNAYIKSNKFSTAKIEKQLKSQFPKFNYRNGYGKPEGIVIHETANNSSTITGEINYMSTNYNNAFVHAFVDKSRIIQIHPTENGVWGAGQYANARFIQVELVRSKTFDEFARSINNYAYYAAYLLDQYNLPVDSAHSDGKGTVWSHDAVTRYLGGTTHTDPVAYFNQWGYNFNNFVSLINEKYKAMQVNYEKIEYDKAITAYSRVKTATGNSVWTKPNKTEGAKLVNPLSSYSGKNLRIIREAKTSGGTIWYQFSVGGKTIGWVDSKALNTFYTPSMEKTITGTRYVLPSKQTVHYYGLPVEDSAIDRGPLSKFNGQALTLQREATIEGQLWYRVKDLGWVKAVNLTTTKYDLIEYDKAITAYSRVKTAAGNYVWSKPNKTEGAKQGSALSTYSGKNMRIIREAKTSSGTIWYQFSIDGKTIGWVDTKALNTFYTPSMEKNLTATRYVAPGQETQHYYGLPVADSAIDRGPLSKFAGQTLTVQREATIEGQLWYRVKDLGWTKASTLTATQYDKLEYDKAITAYSRVKTATGNSVWTKPYRTSGYKLVNPLSSYAGKNLRIIREAKTSSGIWYQFSVGGKTIGWVDSKALNTFYTPSMEKTITGTRYVLPSKQTVHYYGLPVEDSAIDRGPLSKFNGQALTLQREATIEGQLWYRVKDLGWVKAANLTTTKYDTLSYDKAITAYSRVKTATGNSVWTKPNKIEGAQKISALSTYSGKNMRILREAKTSSGTIWYQFSVGGKTIGWVETKALNTFYTPSMEKNLTATRYVLTSKKNEHYYGLPVVDSAIDRGPLSKFSGKTLTVQREATIEGQLWYRVKDLGWTKAANLSAKKQ</sequence>
<gene>
    <name evidence="5" type="primary">ami</name>
</gene>
<comment type="function">
    <text evidence="8">A bacteriolysin able to lyse both L.monocytogenes and S.aureus.</text>
</comment>
<comment type="subcellular location">
    <subcellularLocation>
        <location evidence="4">Cell surface</location>
    </subcellularLocation>
    <subcellularLocation>
        <location evidence="7">Cell membrane</location>
    </subcellularLocation>
    <text evidence="8">Anchored by its GW repeats to the cell surface.</text>
</comment>
<comment type="domain">
    <text evidence="8">The C-terminus has 8 GW repeats.</text>
</comment>
<comment type="disruption phenotype">
    <text evidence="3 4">Decrease in lytic activity on L.monocytogenes and S.aureus (PubMed:9282740). Decreased adhesion to mammalian host cells, however no change in host invasion and host intracellular growth (PubMed:10746777).</text>
</comment>
<comment type="similarity">
    <text evidence="6">In the N-terminal section; belongs to the N-acetylmuramoyl-L-alanine amidase 2 family.</text>
</comment>
<name>AMI_LISMG</name>
<accession>O33983</accession>
<feature type="signal peptide" evidence="1">
    <location>
        <begin position="1"/>
        <end position="30"/>
    </location>
</feature>
<feature type="chain" id="PRO_5004158194" description="Protein Ami" evidence="1">
    <location>
        <begin position="31"/>
        <end position="917"/>
    </location>
</feature>
<feature type="domain" description="N-acetylmuramoyl-L-alanine amidase" evidence="1">
    <location>
        <begin position="118"/>
        <end position="245"/>
    </location>
</feature>
<feature type="domain" description="GW 1" evidence="2">
    <location>
        <begin position="279"/>
        <end position="358"/>
    </location>
</feature>
<feature type="domain" description="GW 2" evidence="2">
    <location>
        <begin position="361"/>
        <end position="435"/>
    </location>
</feature>
<feature type="domain" description="GW 3" evidence="2">
    <location>
        <begin position="440"/>
        <end position="519"/>
    </location>
</feature>
<feature type="domain" description="GW 4" evidence="2">
    <location>
        <begin position="522"/>
        <end position="596"/>
    </location>
</feature>
<feature type="domain" description="GW 5" evidence="2">
    <location>
        <begin position="601"/>
        <end position="679"/>
    </location>
</feature>
<feature type="domain" description="GW 6" evidence="2">
    <location>
        <begin position="682"/>
        <end position="756"/>
    </location>
</feature>
<feature type="domain" description="GW 7" evidence="2">
    <location>
        <begin position="761"/>
        <end position="840"/>
    </location>
</feature>
<feature type="domain" description="GW 8" evidence="2">
    <location>
        <begin position="843"/>
        <end position="917"/>
    </location>
</feature>
<feature type="region of interest" description="GW repeat region, necessary and sufficient for cell surface attachment" evidence="4">
    <location>
        <begin position="262"/>
        <end position="917"/>
    </location>
</feature>
<proteinExistence type="inferred from homology"/>
<keyword id="KW-1003">Cell membrane</keyword>
<keyword id="KW-0961">Cell wall biogenesis/degradation</keyword>
<keyword id="KW-0378">Hydrolase</keyword>
<keyword id="KW-0472">Membrane</keyword>
<keyword id="KW-0677">Repeat</keyword>
<keyword id="KW-0732">Signal</keyword>
<dbReference type="EC" id="3.2.1.-" evidence="8"/>
<dbReference type="EMBL" id="U82488">
    <property type="protein sequence ID" value="AAC45605.1"/>
    <property type="molecule type" value="Genomic_DNA"/>
</dbReference>
<dbReference type="SMR" id="O33983"/>
<dbReference type="MoonProt" id="O33983"/>
<dbReference type="GO" id="GO:0009986">
    <property type="term" value="C:cell surface"/>
    <property type="evidence" value="ECO:0000314"/>
    <property type="project" value="CAFA"/>
</dbReference>
<dbReference type="GO" id="GO:0005886">
    <property type="term" value="C:plasma membrane"/>
    <property type="evidence" value="ECO:0007669"/>
    <property type="project" value="UniProtKB-SubCell"/>
</dbReference>
<dbReference type="GO" id="GO:0008745">
    <property type="term" value="F:N-acetylmuramoyl-L-alanine amidase activity"/>
    <property type="evidence" value="ECO:0007669"/>
    <property type="project" value="InterPro"/>
</dbReference>
<dbReference type="GO" id="GO:0044651">
    <property type="term" value="P:adhesion of symbiont to host epithelial cell"/>
    <property type="evidence" value="ECO:0000314"/>
    <property type="project" value="CAFA"/>
</dbReference>
<dbReference type="GO" id="GO:0071555">
    <property type="term" value="P:cell wall organization"/>
    <property type="evidence" value="ECO:0007669"/>
    <property type="project" value="UniProtKB-KW"/>
</dbReference>
<dbReference type="GO" id="GO:0009253">
    <property type="term" value="P:peptidoglycan catabolic process"/>
    <property type="evidence" value="ECO:0007669"/>
    <property type="project" value="InterPro"/>
</dbReference>
<dbReference type="CDD" id="cd06583">
    <property type="entry name" value="PGRP"/>
    <property type="match status" value="1"/>
</dbReference>
<dbReference type="FunFam" id="3.40.80.10:FF:000013">
    <property type="entry name" value="Autolysin amidase"/>
    <property type="match status" value="1"/>
</dbReference>
<dbReference type="FunFam" id="2.30.30.170:FF:000001">
    <property type="entry name" value="Internalin B"/>
    <property type="match status" value="4"/>
</dbReference>
<dbReference type="Gene3D" id="2.30.30.170">
    <property type="match status" value="8"/>
</dbReference>
<dbReference type="Gene3D" id="3.40.80.10">
    <property type="entry name" value="Peptidoglycan recognition protein-like"/>
    <property type="match status" value="1"/>
</dbReference>
<dbReference type="InterPro" id="IPR036505">
    <property type="entry name" value="Amidase/PGRP_sf"/>
</dbReference>
<dbReference type="InterPro" id="IPR002502">
    <property type="entry name" value="Amidase_domain"/>
</dbReference>
<dbReference type="InterPro" id="IPR051056">
    <property type="entry name" value="Glycosyl_Hydrolase_73"/>
</dbReference>
<dbReference type="InterPro" id="IPR025987">
    <property type="entry name" value="GW_dom"/>
</dbReference>
<dbReference type="InterPro" id="IPR038200">
    <property type="entry name" value="GW_dom_sf"/>
</dbReference>
<dbReference type="NCBIfam" id="NF033202">
    <property type="entry name" value="GW_glycos_SH3"/>
    <property type="match status" value="8"/>
</dbReference>
<dbReference type="PANTHER" id="PTHR33308:SF10">
    <property type="entry name" value="EXO-GLUCOSAMINIDASE LYTG"/>
    <property type="match status" value="1"/>
</dbReference>
<dbReference type="PANTHER" id="PTHR33308">
    <property type="entry name" value="PEPTIDOGLYCAN HYDROLASE FLGJ"/>
    <property type="match status" value="1"/>
</dbReference>
<dbReference type="Pfam" id="PF01510">
    <property type="entry name" value="Amidase_2"/>
    <property type="match status" value="1"/>
</dbReference>
<dbReference type="Pfam" id="PF13457">
    <property type="entry name" value="GW"/>
    <property type="match status" value="8"/>
</dbReference>
<dbReference type="SMART" id="SM00644">
    <property type="entry name" value="Ami_2"/>
    <property type="match status" value="1"/>
</dbReference>
<dbReference type="SUPFAM" id="SSF55846">
    <property type="entry name" value="N-acetylmuramoyl-L-alanine amidase-like"/>
    <property type="match status" value="1"/>
</dbReference>
<dbReference type="SUPFAM" id="SSF82057">
    <property type="entry name" value="Prokaryotic SH3-related domain"/>
    <property type="match status" value="8"/>
</dbReference>
<dbReference type="PROSITE" id="PS51780">
    <property type="entry name" value="GW"/>
    <property type="match status" value="8"/>
</dbReference>